<comment type="catalytic activity">
    <reaction>
        <text>L-methionyl-[protein] + [thioredoxin]-disulfide + H2O = L-methionyl-(R)-S-oxide-[protein] + [thioredoxin]-dithiol</text>
        <dbReference type="Rhea" id="RHEA:24164"/>
        <dbReference type="Rhea" id="RHEA-COMP:10698"/>
        <dbReference type="Rhea" id="RHEA-COMP:10700"/>
        <dbReference type="Rhea" id="RHEA-COMP:12313"/>
        <dbReference type="Rhea" id="RHEA-COMP:12314"/>
        <dbReference type="ChEBI" id="CHEBI:15377"/>
        <dbReference type="ChEBI" id="CHEBI:16044"/>
        <dbReference type="ChEBI" id="CHEBI:29950"/>
        <dbReference type="ChEBI" id="CHEBI:45764"/>
        <dbReference type="ChEBI" id="CHEBI:50058"/>
        <dbReference type="EC" id="1.8.4.12"/>
    </reaction>
</comment>
<comment type="cofactor">
    <cofactor evidence="1">
        <name>Zn(2+)</name>
        <dbReference type="ChEBI" id="CHEBI:29105"/>
    </cofactor>
    <text evidence="1">Binds 1 zinc ion per subunit. The zinc ion is important for the structural integrity of the protein.</text>
</comment>
<comment type="similarity">
    <text evidence="3">Belongs to the MsrB Met sulfoxide reductase family.</text>
</comment>
<comment type="sequence caution" evidence="3">
    <conflict type="erroneous initiation">
        <sequence resource="EMBL-CDS" id="AAN80642"/>
    </conflict>
</comment>
<feature type="initiator methionine" description="Removed" evidence="1">
    <location>
        <position position="1"/>
    </location>
</feature>
<feature type="chain" id="PRO_0000140273" description="Peptide methionine sulfoxide reductase MsrB">
    <location>
        <begin position="2"/>
        <end position="137"/>
    </location>
</feature>
<feature type="domain" description="MsrB" evidence="2">
    <location>
        <begin position="7"/>
        <end position="129"/>
    </location>
</feature>
<feature type="active site" description="Nucleophile" evidence="2">
    <location>
        <position position="118"/>
    </location>
</feature>
<feature type="binding site" evidence="2">
    <location>
        <position position="46"/>
    </location>
    <ligand>
        <name>Zn(2+)</name>
        <dbReference type="ChEBI" id="CHEBI:29105"/>
    </ligand>
</feature>
<feature type="binding site" evidence="2">
    <location>
        <position position="49"/>
    </location>
    <ligand>
        <name>Zn(2+)</name>
        <dbReference type="ChEBI" id="CHEBI:29105"/>
    </ligand>
</feature>
<feature type="binding site" evidence="2">
    <location>
        <position position="95"/>
    </location>
    <ligand>
        <name>Zn(2+)</name>
        <dbReference type="ChEBI" id="CHEBI:29105"/>
    </ligand>
</feature>
<feature type="binding site" evidence="2">
    <location>
        <position position="98"/>
    </location>
    <ligand>
        <name>Zn(2+)</name>
        <dbReference type="ChEBI" id="CHEBI:29105"/>
    </ligand>
</feature>
<keyword id="KW-0479">Metal-binding</keyword>
<keyword id="KW-0560">Oxidoreductase</keyword>
<keyword id="KW-1185">Reference proteome</keyword>
<keyword id="KW-0862">Zinc</keyword>
<organism>
    <name type="scientific">Escherichia coli O6:H1 (strain CFT073 / ATCC 700928 / UPEC)</name>
    <dbReference type="NCBI Taxonomy" id="199310"/>
    <lineage>
        <taxon>Bacteria</taxon>
        <taxon>Pseudomonadati</taxon>
        <taxon>Pseudomonadota</taxon>
        <taxon>Gammaproteobacteria</taxon>
        <taxon>Enterobacterales</taxon>
        <taxon>Enterobacteriaceae</taxon>
        <taxon>Escherichia</taxon>
    </lineage>
</organism>
<protein>
    <recommendedName>
        <fullName>Peptide methionine sulfoxide reductase MsrB</fullName>
        <ecNumber>1.8.4.12</ecNumber>
    </recommendedName>
    <alternativeName>
        <fullName>Peptide-methionine (R)-S-oxide reductase</fullName>
    </alternativeName>
</protein>
<evidence type="ECO:0000250" key="1"/>
<evidence type="ECO:0000255" key="2">
    <source>
        <dbReference type="PROSITE-ProRule" id="PRU01126"/>
    </source>
</evidence>
<evidence type="ECO:0000305" key="3"/>
<reference key="1">
    <citation type="journal article" date="2002" name="Proc. Natl. Acad. Sci. U.S.A.">
        <title>Extensive mosaic structure revealed by the complete genome sequence of uropathogenic Escherichia coli.</title>
        <authorList>
            <person name="Welch R.A."/>
            <person name="Burland V."/>
            <person name="Plunkett G. III"/>
            <person name="Redford P."/>
            <person name="Roesch P."/>
            <person name="Rasko D."/>
            <person name="Buckles E.L."/>
            <person name="Liou S.-R."/>
            <person name="Boutin A."/>
            <person name="Hackett J."/>
            <person name="Stroud D."/>
            <person name="Mayhew G.F."/>
            <person name="Rose D.J."/>
            <person name="Zhou S."/>
            <person name="Schwartz D.C."/>
            <person name="Perna N.T."/>
            <person name="Mobley H.L.T."/>
            <person name="Donnenberg M.S."/>
            <person name="Blattner F.R."/>
        </authorList>
    </citation>
    <scope>NUCLEOTIDE SEQUENCE [LARGE SCALE GENOMIC DNA]</scope>
    <source>
        <strain>CFT073 / ATCC 700928 / UPEC</strain>
    </source>
</reference>
<gene>
    <name type="primary">msrB</name>
    <name type="ordered locus">c2183</name>
</gene>
<sequence length="137" mass="15451">MANKPSAEELKKNLSEMQFYVTQNHGTEPPFTGRLLHNKRDGVYHCLICDAPLFHSQTKYDSGCGWPSFYEPVSEESIRYIKDLSHGMQRIEIRCGNCDAHLGHVFPDGPQPTGERYCVNSASLRFTDGENGEEING</sequence>
<dbReference type="EC" id="1.8.4.12"/>
<dbReference type="EMBL" id="AE014075">
    <property type="protein sequence ID" value="AAN80642.1"/>
    <property type="status" value="ALT_INIT"/>
    <property type="molecule type" value="Genomic_DNA"/>
</dbReference>
<dbReference type="RefSeq" id="WP_001284618.1">
    <property type="nucleotide sequence ID" value="NZ_CP051263.1"/>
</dbReference>
<dbReference type="SMR" id="P0A747"/>
<dbReference type="STRING" id="199310.c2183"/>
<dbReference type="GeneID" id="93775987"/>
<dbReference type="KEGG" id="ecc:c2183"/>
<dbReference type="eggNOG" id="COG0229">
    <property type="taxonomic scope" value="Bacteria"/>
</dbReference>
<dbReference type="HOGENOM" id="CLU_031040_8_5_6"/>
<dbReference type="Proteomes" id="UP000001410">
    <property type="component" value="Chromosome"/>
</dbReference>
<dbReference type="GO" id="GO:0005737">
    <property type="term" value="C:cytoplasm"/>
    <property type="evidence" value="ECO:0007669"/>
    <property type="project" value="TreeGrafter"/>
</dbReference>
<dbReference type="GO" id="GO:0033743">
    <property type="term" value="F:peptide-methionine (R)-S-oxide reductase activity"/>
    <property type="evidence" value="ECO:0007669"/>
    <property type="project" value="UniProtKB-UniRule"/>
</dbReference>
<dbReference type="GO" id="GO:0008270">
    <property type="term" value="F:zinc ion binding"/>
    <property type="evidence" value="ECO:0007669"/>
    <property type="project" value="UniProtKB-UniRule"/>
</dbReference>
<dbReference type="GO" id="GO:0030091">
    <property type="term" value="P:protein repair"/>
    <property type="evidence" value="ECO:0007669"/>
    <property type="project" value="InterPro"/>
</dbReference>
<dbReference type="GO" id="GO:0006979">
    <property type="term" value="P:response to oxidative stress"/>
    <property type="evidence" value="ECO:0007669"/>
    <property type="project" value="InterPro"/>
</dbReference>
<dbReference type="FunFam" id="2.170.150.20:FF:000001">
    <property type="entry name" value="Peptide methionine sulfoxide reductase MsrB"/>
    <property type="match status" value="1"/>
</dbReference>
<dbReference type="Gene3D" id="2.170.150.20">
    <property type="entry name" value="Peptide methionine sulfoxide reductase"/>
    <property type="match status" value="1"/>
</dbReference>
<dbReference type="HAMAP" id="MF_01400">
    <property type="entry name" value="MsrB"/>
    <property type="match status" value="1"/>
</dbReference>
<dbReference type="InterPro" id="IPR028427">
    <property type="entry name" value="Met_Sox_Rdtase_MsrB"/>
</dbReference>
<dbReference type="InterPro" id="IPR002579">
    <property type="entry name" value="Met_Sox_Rdtase_MsrB_dom"/>
</dbReference>
<dbReference type="InterPro" id="IPR011057">
    <property type="entry name" value="Mss4-like_sf"/>
</dbReference>
<dbReference type="NCBIfam" id="TIGR00357">
    <property type="entry name" value="peptide-methionine (R)-S-oxide reductase MsrB"/>
    <property type="match status" value="1"/>
</dbReference>
<dbReference type="PANTHER" id="PTHR10173">
    <property type="entry name" value="METHIONINE SULFOXIDE REDUCTASE"/>
    <property type="match status" value="1"/>
</dbReference>
<dbReference type="PANTHER" id="PTHR10173:SF52">
    <property type="entry name" value="METHIONINE-R-SULFOXIDE REDUCTASE B1"/>
    <property type="match status" value="1"/>
</dbReference>
<dbReference type="Pfam" id="PF01641">
    <property type="entry name" value="SelR"/>
    <property type="match status" value="1"/>
</dbReference>
<dbReference type="SUPFAM" id="SSF51316">
    <property type="entry name" value="Mss4-like"/>
    <property type="match status" value="1"/>
</dbReference>
<dbReference type="PROSITE" id="PS51790">
    <property type="entry name" value="MSRB"/>
    <property type="match status" value="1"/>
</dbReference>
<proteinExistence type="inferred from homology"/>
<name>MSRB_ECOL6</name>
<accession>P0A747</accession>
<accession>P39903</accession>
<accession>P76232</accession>
<accession>P76912</accession>